<comment type="function">
    <text evidence="1">This protein specifically catalyzes the removal of signal peptides from prolipoproteins.</text>
</comment>
<comment type="catalytic activity">
    <reaction evidence="1">
        <text>Release of signal peptides from bacterial membrane prolipoproteins. Hydrolyzes -Xaa-Yaa-Zaa-|-(S,diacylglyceryl)Cys-, in which Xaa is hydrophobic (preferably Leu), and Yaa (Ala or Ser) and Zaa (Gly or Ala) have small, neutral side chains.</text>
        <dbReference type="EC" id="3.4.23.36"/>
    </reaction>
</comment>
<comment type="pathway">
    <text evidence="1">Protein modification; lipoprotein biosynthesis (signal peptide cleavage).</text>
</comment>
<comment type="subcellular location">
    <subcellularLocation>
        <location evidence="1">Cell membrane</location>
        <topology evidence="1">Multi-pass membrane protein</topology>
    </subcellularLocation>
</comment>
<comment type="similarity">
    <text evidence="1">Belongs to the peptidase A8 family.</text>
</comment>
<comment type="sequence caution" evidence="3">
    <conflict type="erroneous initiation">
        <sequence resource="EMBL-CDS" id="AAT89324"/>
    </conflict>
</comment>
<name>LSPA_LEIXX</name>
<evidence type="ECO:0000255" key="1">
    <source>
        <dbReference type="HAMAP-Rule" id="MF_00161"/>
    </source>
</evidence>
<evidence type="ECO:0000256" key="2">
    <source>
        <dbReference type="SAM" id="MobiDB-lite"/>
    </source>
</evidence>
<evidence type="ECO:0000305" key="3"/>
<gene>
    <name evidence="1" type="primary">lspA</name>
    <name type="ordered locus">Lxx15175</name>
</gene>
<protein>
    <recommendedName>
        <fullName evidence="1">Lipoprotein signal peptidase</fullName>
        <ecNumber evidence="1">3.4.23.36</ecNumber>
    </recommendedName>
    <alternativeName>
        <fullName evidence="1">Prolipoprotein signal peptidase</fullName>
    </alternativeName>
    <alternativeName>
        <fullName evidence="1">Signal peptidase II</fullName>
        <shortName evidence="1">SPase II</shortName>
    </alternativeName>
</protein>
<dbReference type="EC" id="3.4.23.36" evidence="1"/>
<dbReference type="EMBL" id="AE016822">
    <property type="protein sequence ID" value="AAT89324.1"/>
    <property type="status" value="ALT_INIT"/>
    <property type="molecule type" value="Genomic_DNA"/>
</dbReference>
<dbReference type="SMR" id="Q6AE72"/>
<dbReference type="STRING" id="281090.Lxx15175"/>
<dbReference type="KEGG" id="lxx:Lxx15175"/>
<dbReference type="eggNOG" id="COG0597">
    <property type="taxonomic scope" value="Bacteria"/>
</dbReference>
<dbReference type="HOGENOM" id="CLU_083252_2_2_11"/>
<dbReference type="UniPathway" id="UPA00665"/>
<dbReference type="Proteomes" id="UP000001306">
    <property type="component" value="Chromosome"/>
</dbReference>
<dbReference type="GO" id="GO:0005886">
    <property type="term" value="C:plasma membrane"/>
    <property type="evidence" value="ECO:0007669"/>
    <property type="project" value="UniProtKB-SubCell"/>
</dbReference>
<dbReference type="GO" id="GO:0004190">
    <property type="term" value="F:aspartic-type endopeptidase activity"/>
    <property type="evidence" value="ECO:0007669"/>
    <property type="project" value="UniProtKB-UniRule"/>
</dbReference>
<dbReference type="GO" id="GO:0006508">
    <property type="term" value="P:proteolysis"/>
    <property type="evidence" value="ECO:0007669"/>
    <property type="project" value="UniProtKB-KW"/>
</dbReference>
<dbReference type="HAMAP" id="MF_00161">
    <property type="entry name" value="LspA"/>
    <property type="match status" value="1"/>
</dbReference>
<dbReference type="InterPro" id="IPR001872">
    <property type="entry name" value="Peptidase_A8"/>
</dbReference>
<dbReference type="NCBIfam" id="TIGR00077">
    <property type="entry name" value="lspA"/>
    <property type="match status" value="1"/>
</dbReference>
<dbReference type="PANTHER" id="PTHR33695">
    <property type="entry name" value="LIPOPROTEIN SIGNAL PEPTIDASE"/>
    <property type="match status" value="1"/>
</dbReference>
<dbReference type="PANTHER" id="PTHR33695:SF1">
    <property type="entry name" value="LIPOPROTEIN SIGNAL PEPTIDASE"/>
    <property type="match status" value="1"/>
</dbReference>
<dbReference type="Pfam" id="PF01252">
    <property type="entry name" value="Peptidase_A8"/>
    <property type="match status" value="1"/>
</dbReference>
<dbReference type="PRINTS" id="PR00781">
    <property type="entry name" value="LIPOSIGPTASE"/>
</dbReference>
<accession>Q6AE72</accession>
<organism>
    <name type="scientific">Leifsonia xyli subsp. xyli (strain CTCB07)</name>
    <dbReference type="NCBI Taxonomy" id="281090"/>
    <lineage>
        <taxon>Bacteria</taxon>
        <taxon>Bacillati</taxon>
        <taxon>Actinomycetota</taxon>
        <taxon>Actinomycetes</taxon>
        <taxon>Micrococcales</taxon>
        <taxon>Microbacteriaceae</taxon>
        <taxon>Leifsonia</taxon>
    </lineage>
</organism>
<sequence length="216" mass="22631">MATSRTAPTRAPSLRSSPALEASPSRTKASVGALVILAVVALCVYLMDQITKALVVSNLSEGQQVAVLGQLLQLHFVKNPGAAFSIGSGSTWIFSLVGVGVLGFVIWYAPRIRSTAWAILFGLLLGGLLGNLTDRLFREPGFGVGHVIDFLQIPLLTAIFNLADVAIVFSMGLFLLLTLRGIGLDGRRQRDEGAGVSSASPAGDESAADKPENLSA</sequence>
<feature type="chain" id="PRO_0000281028" description="Lipoprotein signal peptidase">
    <location>
        <begin position="1"/>
        <end position="216"/>
    </location>
</feature>
<feature type="transmembrane region" description="Helical" evidence="1">
    <location>
        <begin position="31"/>
        <end position="51"/>
    </location>
</feature>
<feature type="transmembrane region" description="Helical" evidence="1">
    <location>
        <begin position="89"/>
        <end position="109"/>
    </location>
</feature>
<feature type="transmembrane region" description="Helical" evidence="1">
    <location>
        <begin position="114"/>
        <end position="134"/>
    </location>
</feature>
<feature type="transmembrane region" description="Helical" evidence="1">
    <location>
        <begin position="159"/>
        <end position="179"/>
    </location>
</feature>
<feature type="region of interest" description="Disordered" evidence="2">
    <location>
        <begin position="1"/>
        <end position="21"/>
    </location>
</feature>
<feature type="region of interest" description="Disordered" evidence="2">
    <location>
        <begin position="189"/>
        <end position="216"/>
    </location>
</feature>
<feature type="compositionally biased region" description="Basic and acidic residues" evidence="2">
    <location>
        <begin position="207"/>
        <end position="216"/>
    </location>
</feature>
<feature type="active site" evidence="1">
    <location>
        <position position="149"/>
    </location>
</feature>
<feature type="active site" evidence="1">
    <location>
        <position position="164"/>
    </location>
</feature>
<reference key="1">
    <citation type="journal article" date="2004" name="Mol. Plant Microbe Interact.">
        <title>The genome sequence of the Gram-positive sugarcane pathogen Leifsonia xyli subsp. xyli.</title>
        <authorList>
            <person name="Monteiro-Vitorello C.B."/>
            <person name="Camargo L.E.A."/>
            <person name="Van Sluys M.A."/>
            <person name="Kitajima J.P."/>
            <person name="Truffi D."/>
            <person name="do Amaral A.M."/>
            <person name="Harakava R."/>
            <person name="de Oliveira J.C.F."/>
            <person name="Wood D."/>
            <person name="de Oliveira M.C."/>
            <person name="Miyaki C.Y."/>
            <person name="Takita M.A."/>
            <person name="da Silva A.C.R."/>
            <person name="Furlan L.R."/>
            <person name="Carraro D.M."/>
            <person name="Camarotte G."/>
            <person name="Almeida N.F. Jr."/>
            <person name="Carrer H."/>
            <person name="Coutinho L.L."/>
            <person name="El-Dorry H.A."/>
            <person name="Ferro M.I.T."/>
            <person name="Gagliardi P.R."/>
            <person name="Giglioti E."/>
            <person name="Goldman M.H.S."/>
            <person name="Goldman G.H."/>
            <person name="Kimura E.T."/>
            <person name="Ferro E.S."/>
            <person name="Kuramae E.E."/>
            <person name="Lemos E.G.M."/>
            <person name="Lemos M.V.F."/>
            <person name="Mauro S.M.Z."/>
            <person name="Machado M.A."/>
            <person name="Marino C.L."/>
            <person name="Menck C.F."/>
            <person name="Nunes L.R."/>
            <person name="Oliveira R.C."/>
            <person name="Pereira G.G."/>
            <person name="Siqueira W."/>
            <person name="de Souza A.A."/>
            <person name="Tsai S.M."/>
            <person name="Zanca A.S."/>
            <person name="Simpson A.J.G."/>
            <person name="Brumbley S.M."/>
            <person name="Setubal J.C."/>
        </authorList>
    </citation>
    <scope>NUCLEOTIDE SEQUENCE [LARGE SCALE GENOMIC DNA]</scope>
    <source>
        <strain>CTCB07</strain>
    </source>
</reference>
<reference key="2">
    <citation type="journal article" date="2007" name="Mol. Plant Pathol.">
        <title>Putative lipoproteins identified by bioinformatic genome analysis of Leifsonia xyli ssp. xyli, the causative agent of sugarcane ratoon stunting disease.</title>
        <authorList>
            <person name="Sutcliffe I.C."/>
            <person name="Hutchings M.I."/>
        </authorList>
        <dbReference type="AGRICOLA" id="IND43866162"/>
    </citation>
    <scope>DISCUSSION OF SEQUENCE</scope>
</reference>
<keyword id="KW-0064">Aspartyl protease</keyword>
<keyword id="KW-1003">Cell membrane</keyword>
<keyword id="KW-0378">Hydrolase</keyword>
<keyword id="KW-0472">Membrane</keyword>
<keyword id="KW-0645">Protease</keyword>
<keyword id="KW-1185">Reference proteome</keyword>
<keyword id="KW-0812">Transmembrane</keyword>
<keyword id="KW-1133">Transmembrane helix</keyword>
<proteinExistence type="inferred from homology"/>